<sequence length="81" mass="9030">MNVEHEVNLLVEEIHRLGSKNADGKLSVKFGVLFQDDRCANLFEALVGTLKAAKRRKIVTYAGELLLQGVHDDVDIVLLQD</sequence>
<proteinExistence type="evidence at protein level"/>
<gene>
    <name type="primary">Abracl</name>
</gene>
<feature type="chain" id="PRO_0000365536" description="Costars family protein ABRACL">
    <location>
        <begin position="1"/>
        <end position="81"/>
    </location>
</feature>
<feature type="modified residue" description="N-acetylmethionine" evidence="1">
    <location>
        <position position="1"/>
    </location>
</feature>
<organism>
    <name type="scientific">Mus musculus</name>
    <name type="common">Mouse</name>
    <dbReference type="NCBI Taxonomy" id="10090"/>
    <lineage>
        <taxon>Eukaryota</taxon>
        <taxon>Metazoa</taxon>
        <taxon>Chordata</taxon>
        <taxon>Craniata</taxon>
        <taxon>Vertebrata</taxon>
        <taxon>Euteleostomi</taxon>
        <taxon>Mammalia</taxon>
        <taxon>Eutheria</taxon>
        <taxon>Euarchontoglires</taxon>
        <taxon>Glires</taxon>
        <taxon>Rodentia</taxon>
        <taxon>Myomorpha</taxon>
        <taxon>Muroidea</taxon>
        <taxon>Muridae</taxon>
        <taxon>Murinae</taxon>
        <taxon>Mus</taxon>
        <taxon>Mus</taxon>
    </lineage>
</organism>
<protein>
    <recommendedName>
        <fullName>Costars family protein ABRACL</fullName>
    </recommendedName>
    <alternativeName>
        <fullName>ABRA C-terminal-like protein</fullName>
    </alternativeName>
</protein>
<reference key="1">
    <citation type="journal article" date="2005" name="Science">
        <title>The transcriptional landscape of the mammalian genome.</title>
        <authorList>
            <person name="Carninci P."/>
            <person name="Kasukawa T."/>
            <person name="Katayama S."/>
            <person name="Gough J."/>
            <person name="Frith M.C."/>
            <person name="Maeda N."/>
            <person name="Oyama R."/>
            <person name="Ravasi T."/>
            <person name="Lenhard B."/>
            <person name="Wells C."/>
            <person name="Kodzius R."/>
            <person name="Shimokawa K."/>
            <person name="Bajic V.B."/>
            <person name="Brenner S.E."/>
            <person name="Batalov S."/>
            <person name="Forrest A.R."/>
            <person name="Zavolan M."/>
            <person name="Davis M.J."/>
            <person name="Wilming L.G."/>
            <person name="Aidinis V."/>
            <person name="Allen J.E."/>
            <person name="Ambesi-Impiombato A."/>
            <person name="Apweiler R."/>
            <person name="Aturaliya R.N."/>
            <person name="Bailey T.L."/>
            <person name="Bansal M."/>
            <person name="Baxter L."/>
            <person name="Beisel K.W."/>
            <person name="Bersano T."/>
            <person name="Bono H."/>
            <person name="Chalk A.M."/>
            <person name="Chiu K.P."/>
            <person name="Choudhary V."/>
            <person name="Christoffels A."/>
            <person name="Clutterbuck D.R."/>
            <person name="Crowe M.L."/>
            <person name="Dalla E."/>
            <person name="Dalrymple B.P."/>
            <person name="de Bono B."/>
            <person name="Della Gatta G."/>
            <person name="di Bernardo D."/>
            <person name="Down T."/>
            <person name="Engstrom P."/>
            <person name="Fagiolini M."/>
            <person name="Faulkner G."/>
            <person name="Fletcher C.F."/>
            <person name="Fukushima T."/>
            <person name="Furuno M."/>
            <person name="Futaki S."/>
            <person name="Gariboldi M."/>
            <person name="Georgii-Hemming P."/>
            <person name="Gingeras T.R."/>
            <person name="Gojobori T."/>
            <person name="Green R.E."/>
            <person name="Gustincich S."/>
            <person name="Harbers M."/>
            <person name="Hayashi Y."/>
            <person name="Hensch T.K."/>
            <person name="Hirokawa N."/>
            <person name="Hill D."/>
            <person name="Huminiecki L."/>
            <person name="Iacono M."/>
            <person name="Ikeo K."/>
            <person name="Iwama A."/>
            <person name="Ishikawa T."/>
            <person name="Jakt M."/>
            <person name="Kanapin A."/>
            <person name="Katoh M."/>
            <person name="Kawasawa Y."/>
            <person name="Kelso J."/>
            <person name="Kitamura H."/>
            <person name="Kitano H."/>
            <person name="Kollias G."/>
            <person name="Krishnan S.P."/>
            <person name="Kruger A."/>
            <person name="Kummerfeld S.K."/>
            <person name="Kurochkin I.V."/>
            <person name="Lareau L.F."/>
            <person name="Lazarevic D."/>
            <person name="Lipovich L."/>
            <person name="Liu J."/>
            <person name="Liuni S."/>
            <person name="McWilliam S."/>
            <person name="Madan Babu M."/>
            <person name="Madera M."/>
            <person name="Marchionni L."/>
            <person name="Matsuda H."/>
            <person name="Matsuzawa S."/>
            <person name="Miki H."/>
            <person name="Mignone F."/>
            <person name="Miyake S."/>
            <person name="Morris K."/>
            <person name="Mottagui-Tabar S."/>
            <person name="Mulder N."/>
            <person name="Nakano N."/>
            <person name="Nakauchi H."/>
            <person name="Ng P."/>
            <person name="Nilsson R."/>
            <person name="Nishiguchi S."/>
            <person name="Nishikawa S."/>
            <person name="Nori F."/>
            <person name="Ohara O."/>
            <person name="Okazaki Y."/>
            <person name="Orlando V."/>
            <person name="Pang K.C."/>
            <person name="Pavan W.J."/>
            <person name="Pavesi G."/>
            <person name="Pesole G."/>
            <person name="Petrovsky N."/>
            <person name="Piazza S."/>
            <person name="Reed J."/>
            <person name="Reid J.F."/>
            <person name="Ring B.Z."/>
            <person name="Ringwald M."/>
            <person name="Rost B."/>
            <person name="Ruan Y."/>
            <person name="Salzberg S.L."/>
            <person name="Sandelin A."/>
            <person name="Schneider C."/>
            <person name="Schoenbach C."/>
            <person name="Sekiguchi K."/>
            <person name="Semple C.A."/>
            <person name="Seno S."/>
            <person name="Sessa L."/>
            <person name="Sheng Y."/>
            <person name="Shibata Y."/>
            <person name="Shimada H."/>
            <person name="Shimada K."/>
            <person name="Silva D."/>
            <person name="Sinclair B."/>
            <person name="Sperling S."/>
            <person name="Stupka E."/>
            <person name="Sugiura K."/>
            <person name="Sultana R."/>
            <person name="Takenaka Y."/>
            <person name="Taki K."/>
            <person name="Tammoja K."/>
            <person name="Tan S.L."/>
            <person name="Tang S."/>
            <person name="Taylor M.S."/>
            <person name="Tegner J."/>
            <person name="Teichmann S.A."/>
            <person name="Ueda H.R."/>
            <person name="van Nimwegen E."/>
            <person name="Verardo R."/>
            <person name="Wei C.L."/>
            <person name="Yagi K."/>
            <person name="Yamanishi H."/>
            <person name="Zabarovsky E."/>
            <person name="Zhu S."/>
            <person name="Zimmer A."/>
            <person name="Hide W."/>
            <person name="Bult C."/>
            <person name="Grimmond S.M."/>
            <person name="Teasdale R.D."/>
            <person name="Liu E.T."/>
            <person name="Brusic V."/>
            <person name="Quackenbush J."/>
            <person name="Wahlestedt C."/>
            <person name="Mattick J.S."/>
            <person name="Hume D.A."/>
            <person name="Kai C."/>
            <person name="Sasaki D."/>
            <person name="Tomaru Y."/>
            <person name="Fukuda S."/>
            <person name="Kanamori-Katayama M."/>
            <person name="Suzuki M."/>
            <person name="Aoki J."/>
            <person name="Arakawa T."/>
            <person name="Iida J."/>
            <person name="Imamura K."/>
            <person name="Itoh M."/>
            <person name="Kato T."/>
            <person name="Kawaji H."/>
            <person name="Kawagashira N."/>
            <person name="Kawashima T."/>
            <person name="Kojima M."/>
            <person name="Kondo S."/>
            <person name="Konno H."/>
            <person name="Nakano K."/>
            <person name="Ninomiya N."/>
            <person name="Nishio T."/>
            <person name="Okada M."/>
            <person name="Plessy C."/>
            <person name="Shibata K."/>
            <person name="Shiraki T."/>
            <person name="Suzuki S."/>
            <person name="Tagami M."/>
            <person name="Waki K."/>
            <person name="Watahiki A."/>
            <person name="Okamura-Oho Y."/>
            <person name="Suzuki H."/>
            <person name="Kawai J."/>
            <person name="Hayashizaki Y."/>
        </authorList>
    </citation>
    <scope>NUCLEOTIDE SEQUENCE [LARGE SCALE MRNA]</scope>
    <source>
        <strain>NOD</strain>
    </source>
</reference>
<reference key="2">
    <citation type="submission" date="2005-09" db="EMBL/GenBank/DDBJ databases">
        <authorList>
            <person name="Mural R.J."/>
            <person name="Adams M.D."/>
            <person name="Myers E.W."/>
            <person name="Smith H.O."/>
            <person name="Venter J.C."/>
        </authorList>
    </citation>
    <scope>NUCLEOTIDE SEQUENCE [LARGE SCALE GENOMIC DNA]</scope>
</reference>
<reference key="3">
    <citation type="journal article" date="2004" name="Genome Res.">
        <title>The status, quality, and expansion of the NIH full-length cDNA project: the Mammalian Gene Collection (MGC).</title>
        <authorList>
            <consortium name="The MGC Project Team"/>
        </authorList>
    </citation>
    <scope>NUCLEOTIDE SEQUENCE [LARGE SCALE MRNA]</scope>
    <source>
        <strain>C57BL/6J</strain>
        <tissue>Mammary gland</tissue>
        <tissue>Pancreas</tissue>
    </source>
</reference>
<reference key="4">
    <citation type="journal article" date="2010" name="Cell">
        <title>A tissue-specific atlas of mouse protein phosphorylation and expression.</title>
        <authorList>
            <person name="Huttlin E.L."/>
            <person name="Jedrychowski M.P."/>
            <person name="Elias J.E."/>
            <person name="Goswami T."/>
            <person name="Rad R."/>
            <person name="Beausoleil S.A."/>
            <person name="Villen J."/>
            <person name="Haas W."/>
            <person name="Sowa M.E."/>
            <person name="Gygi S.P."/>
        </authorList>
    </citation>
    <scope>IDENTIFICATION BY MASS SPECTROMETRY [LARGE SCALE ANALYSIS]</scope>
    <source>
        <tissue>Brain</tissue>
        <tissue>Brown adipose tissue</tissue>
        <tissue>Heart</tissue>
        <tissue>Kidney</tissue>
        <tissue>Liver</tissue>
        <tissue>Lung</tissue>
        <tissue>Pancreas</tissue>
        <tissue>Spleen</tissue>
        <tissue>Testis</tissue>
    </source>
</reference>
<accession>Q4KML4</accession>
<accession>Q8CHQ7</accession>
<dbReference type="EMBL" id="AK171138">
    <property type="protein sequence ID" value="BAE42271.1"/>
    <property type="molecule type" value="mRNA"/>
</dbReference>
<dbReference type="EMBL" id="CH466562">
    <property type="protein sequence ID" value="EDL03474.1"/>
    <property type="molecule type" value="Genomic_DNA"/>
</dbReference>
<dbReference type="EMBL" id="BC039801">
    <property type="protein sequence ID" value="AAH39801.1"/>
    <property type="status" value="ALT_INIT"/>
    <property type="molecule type" value="mRNA"/>
</dbReference>
<dbReference type="EMBL" id="BC098509">
    <property type="protein sequence ID" value="AAH98509.1"/>
    <property type="molecule type" value="mRNA"/>
</dbReference>
<dbReference type="CCDS" id="CCDS48506.1"/>
<dbReference type="RefSeq" id="NP_082716.1">
    <property type="nucleotide sequence ID" value="NM_028440.1"/>
</dbReference>
<dbReference type="SMR" id="Q4KML4"/>
<dbReference type="FunCoup" id="Q4KML4">
    <property type="interactions" value="2"/>
</dbReference>
<dbReference type="IntAct" id="Q4KML4">
    <property type="interactions" value="1"/>
</dbReference>
<dbReference type="MINT" id="Q4KML4"/>
<dbReference type="STRING" id="10090.ENSMUSP00000020002"/>
<dbReference type="iPTMnet" id="Q4KML4"/>
<dbReference type="PhosphoSitePlus" id="Q4KML4"/>
<dbReference type="jPOST" id="Q4KML4"/>
<dbReference type="PaxDb" id="10090-ENSMUSP00000020002"/>
<dbReference type="ProteomicsDB" id="285919"/>
<dbReference type="Pumba" id="Q4KML4"/>
<dbReference type="GeneID" id="73112"/>
<dbReference type="KEGG" id="mmu:73112"/>
<dbReference type="AGR" id="MGI:1920362"/>
<dbReference type="CTD" id="58527"/>
<dbReference type="MGI" id="MGI:1920362">
    <property type="gene designation" value="Abracl"/>
</dbReference>
<dbReference type="eggNOG" id="KOG3376">
    <property type="taxonomic scope" value="Eukaryota"/>
</dbReference>
<dbReference type="InParanoid" id="Q4KML4"/>
<dbReference type="OrthoDB" id="9871914at2759"/>
<dbReference type="PhylomeDB" id="Q4KML4"/>
<dbReference type="BioGRID-ORCS" id="73112">
    <property type="hits" value="1 hit in 76 CRISPR screens"/>
</dbReference>
<dbReference type="ChiTaRS" id="Abracl">
    <property type="organism name" value="mouse"/>
</dbReference>
<dbReference type="PRO" id="PR:Q4KML4"/>
<dbReference type="Proteomes" id="UP000000589">
    <property type="component" value="Unplaced"/>
</dbReference>
<dbReference type="RNAct" id="Q4KML4">
    <property type="molecule type" value="protein"/>
</dbReference>
<dbReference type="FunFam" id="1.10.10.1540:FF:000002">
    <property type="entry name" value="costars family protein ABRACL"/>
    <property type="match status" value="1"/>
</dbReference>
<dbReference type="Gene3D" id="1.10.10.1540">
    <property type="entry name" value="Costar domain"/>
    <property type="match status" value="1"/>
</dbReference>
<dbReference type="InterPro" id="IPR044302">
    <property type="entry name" value="Costars"/>
</dbReference>
<dbReference type="InterPro" id="IPR027817">
    <property type="entry name" value="Costars_dom"/>
</dbReference>
<dbReference type="InterPro" id="IPR038095">
    <property type="entry name" value="Costars_sf"/>
</dbReference>
<dbReference type="PANTHER" id="PTHR46334">
    <property type="entry name" value="COSTARS FAMILY PROTEIN ABRACL"/>
    <property type="match status" value="1"/>
</dbReference>
<dbReference type="PANTHER" id="PTHR46334:SF1">
    <property type="entry name" value="COSTARS FAMILY PROTEIN ABRACL"/>
    <property type="match status" value="1"/>
</dbReference>
<dbReference type="Pfam" id="PF14705">
    <property type="entry name" value="Costars"/>
    <property type="match status" value="1"/>
</dbReference>
<dbReference type="SMART" id="SM01283">
    <property type="entry name" value="Costars"/>
    <property type="match status" value="1"/>
</dbReference>
<name>ABRAL_MOUSE</name>
<keyword id="KW-0007">Acetylation</keyword>
<keyword id="KW-1185">Reference proteome</keyword>
<comment type="similarity">
    <text evidence="2">Belongs to the costars family.</text>
</comment>
<comment type="sequence caution" evidence="2">
    <conflict type="erroneous initiation">
        <sequence resource="EMBL-CDS" id="AAH39801"/>
    </conflict>
    <text>Extended N-terminus.</text>
</comment>
<evidence type="ECO:0000250" key="1">
    <source>
        <dbReference type="UniProtKB" id="Q9P1F3"/>
    </source>
</evidence>
<evidence type="ECO:0000305" key="2"/>